<protein>
    <recommendedName>
        <fullName evidence="3">Photosystem II reaction center protein Z</fullName>
        <shortName evidence="3">PSII-Z</shortName>
    </recommendedName>
</protein>
<evidence type="ECO:0000250" key="1">
    <source>
        <dbReference type="UniProtKB" id="P92276"/>
    </source>
</evidence>
<evidence type="ECO:0000255" key="2"/>
<evidence type="ECO:0000305" key="3"/>
<geneLocation type="chloroplast"/>
<proteinExistence type="inferred from homology"/>
<comment type="function">
    <text evidence="1">May control the interaction of photosystem II (PSII) cores with the light-harvesting antenna, regulates electron flow through the 2 photosystem reaction centers. PSII is a light-driven water plastoquinone oxidoreductase, using light energy to abstract electrons from H(2)O, generating a proton gradient subsequently used for ATP formation.</text>
</comment>
<comment type="subunit">
    <text evidence="1">PSII is composed of 1 copy each of membrane proteins PsbA, PsbB, PsbC, PsbD, PsbE, PsbF, PsbH, PsbI, PsbJ, PsbK, PsbL, PsbM, PsbT, PsbY, PsbZ, Psb30/Ycf12, at least 3 peripheral proteins of the oxygen-evolving complex and a large number of cofactors. It forms dimeric complexes.</text>
</comment>
<comment type="subcellular location">
    <subcellularLocation>
        <location evidence="1">Plastid</location>
        <location evidence="1">Chloroplast thylakoid membrane</location>
        <topology evidence="1">Single-pass membrane protein</topology>
    </subcellularLocation>
</comment>
<comment type="similarity">
    <text evidence="3">Belongs to the PsbZ family.</text>
</comment>
<keyword id="KW-0150">Chloroplast</keyword>
<keyword id="KW-0472">Membrane</keyword>
<keyword id="KW-0602">Photosynthesis</keyword>
<keyword id="KW-0604">Photosystem II</keyword>
<keyword id="KW-0934">Plastid</keyword>
<keyword id="KW-0674">Reaction center</keyword>
<keyword id="KW-0793">Thylakoid</keyword>
<keyword id="KW-0812">Transmembrane</keyword>
<keyword id="KW-1133">Transmembrane helix</keyword>
<organism>
    <name type="scientific">Euglena myxocylindracea</name>
    <dbReference type="NCBI Taxonomy" id="38276"/>
    <lineage>
        <taxon>Eukaryota</taxon>
        <taxon>Discoba</taxon>
        <taxon>Euglenozoa</taxon>
        <taxon>Euglenida</taxon>
        <taxon>Spirocuta</taxon>
        <taxon>Euglenophyceae</taxon>
        <taxon>Euglenales</taxon>
        <taxon>Euglenaceae</taxon>
        <taxon>Euglena</taxon>
    </lineage>
</organism>
<reference key="1">
    <citation type="journal article" date="2002" name="Nucleic Acids Res.">
        <title>Identification and comparative analysis of the chloroplast alpha-subunit gene of DNA-dependent RNA polymerase from seven Euglena species.</title>
        <authorList>
            <person name="Sheveleva E.V."/>
            <person name="Giordani N.V."/>
            <person name="Hallick R.B."/>
        </authorList>
    </citation>
    <scope>NUCLEOTIDE SEQUENCE [GENOMIC DNA]</scope>
</reference>
<accession>Q8SL91</accession>
<name>PSBZ_EUGMY</name>
<feature type="chain" id="PRO_0000217701" description="Photosystem II reaction center protein Z">
    <location>
        <begin position="1" status="less than"/>
        <end position="32"/>
    </location>
</feature>
<feature type="transmembrane region" description="Helical" evidence="2">
    <location>
        <begin position="9"/>
        <end position="29"/>
    </location>
</feature>
<feature type="non-terminal residue">
    <location>
        <position position="1"/>
    </location>
</feature>
<sequence length="32" mass="3726">NSWENNKNIIFSGSLIWVFLLIIVGFLNYLVV</sequence>
<dbReference type="EMBL" id="AY047485">
    <property type="protein sequence ID" value="AAL83363.1"/>
    <property type="molecule type" value="Genomic_DNA"/>
</dbReference>
<dbReference type="SMR" id="Q8SL91"/>
<dbReference type="GO" id="GO:0009535">
    <property type="term" value="C:chloroplast thylakoid membrane"/>
    <property type="evidence" value="ECO:0007669"/>
    <property type="project" value="UniProtKB-SubCell"/>
</dbReference>
<dbReference type="GO" id="GO:0009539">
    <property type="term" value="C:photosystem II reaction center"/>
    <property type="evidence" value="ECO:0007669"/>
    <property type="project" value="InterPro"/>
</dbReference>
<dbReference type="GO" id="GO:0015979">
    <property type="term" value="P:photosynthesis"/>
    <property type="evidence" value="ECO:0007669"/>
    <property type="project" value="UniProtKB-KW"/>
</dbReference>
<dbReference type="GO" id="GO:0042549">
    <property type="term" value="P:photosystem II stabilization"/>
    <property type="evidence" value="ECO:0007669"/>
    <property type="project" value="InterPro"/>
</dbReference>
<dbReference type="Gene3D" id="1.10.287.740">
    <property type="entry name" value="Photosystem II PsbZ, reaction centre"/>
    <property type="match status" value="1"/>
</dbReference>
<dbReference type="InterPro" id="IPR002644">
    <property type="entry name" value="PSII_PsbZ"/>
</dbReference>
<dbReference type="InterPro" id="IPR036512">
    <property type="entry name" value="PSII_PsbZ_sf"/>
</dbReference>
<dbReference type="Pfam" id="PF01737">
    <property type="entry name" value="Ycf9"/>
    <property type="match status" value="1"/>
</dbReference>
<dbReference type="SUPFAM" id="SSF161055">
    <property type="entry name" value="PsbZ-like"/>
    <property type="match status" value="1"/>
</dbReference>
<gene>
    <name evidence="3" type="primary">psbZ</name>
    <name type="synonym">ycf9</name>
</gene>